<reference key="1">
    <citation type="journal article" date="1986" name="Proc. Natl. Acad. Sci. U.S.A.">
        <title>Nucleotide sequence analysis of murine 21-hydroxylase genes: mutations affecting gene expression.</title>
        <authorList>
            <person name="Chaplin D.D."/>
            <person name="Galbraith L.J."/>
            <person name="Seidman J.G."/>
            <person name="White P.C."/>
            <person name="Parker K.L."/>
        </authorList>
    </citation>
    <scope>NUCLEOTIDE SEQUENCE [GENOMIC DNA]</scope>
</reference>
<reference key="2">
    <citation type="journal article" date="1991" name="J. Immunol.">
        <title>The murine Slp gene: additional evidence that sex-limited protein has no biological function.</title>
        <authorList>
            <person name="Zepf N.E."/>
            <person name="Ogata R.T."/>
        </authorList>
    </citation>
    <scope>NUCLEOTIDE SEQUENCE [GENOMIC DNA]</scope>
    <source>
        <strain>B10.WR</strain>
    </source>
</reference>
<reference key="3">
    <citation type="submission" date="1998-06" db="EMBL/GenBank/DDBJ databases">
        <title>Mus musculus 5' truncated pseudogene of tenascin-X, steroid 21-hydroxylase (Cyp21), and sex-limited protein (Slp) genes, partial cds and complete sequences.</title>
        <authorList>
            <person name="Matsumoto K."/>
            <person name="Ikuta T."/>
        </authorList>
    </citation>
    <scope>NUCLEOTIDE SEQUENCE [GENOMIC DNA]</scope>
    <source>
        <strain>C57BL/6 X CBA</strain>
    </source>
</reference>
<reference key="4">
    <citation type="journal article" date="2003" name="Genome Res.">
        <title>Analysis of the gene-dense major histocompatibility complex class III region and its comparison to mouse.</title>
        <authorList>
            <person name="Xie T."/>
            <person name="Rowen L."/>
            <person name="Aguado B."/>
            <person name="Ahearn M.E."/>
            <person name="Madan A."/>
            <person name="Qin S."/>
            <person name="Campbell R.D."/>
            <person name="Hood L."/>
        </authorList>
    </citation>
    <scope>NUCLEOTIDE SEQUENCE [LARGE SCALE GENOMIC DNA]</scope>
    <source>
        <strain>129</strain>
    </source>
</reference>
<reference key="5">
    <citation type="journal article" date="2004" name="Genome Res.">
        <title>The status, quality, and expansion of the NIH full-length cDNA project: the Mammalian Gene Collection (MGC).</title>
        <authorList>
            <consortium name="The MGC Project Team"/>
        </authorList>
    </citation>
    <scope>NUCLEOTIDE SEQUENCE [LARGE SCALE MRNA]</scope>
</reference>
<reference key="6">
    <citation type="journal article" date="1985" name="Proc. Natl. Acad. Sci. U.S.A.">
        <title>Liver mRNA probes disclose two cytochrome P-450 genes duplicated in tandem with the complement C4 loci of the mouse H-2S region.</title>
        <authorList>
            <person name="Amor M."/>
            <person name="Tosi M."/>
            <person name="Duponchel C."/>
            <person name="Steinmetz M."/>
            <person name="Meo T."/>
        </authorList>
    </citation>
    <scope>NUCLEOTIDE SEQUENCE [GENOMIC DNA] OF 399-487</scope>
</reference>
<sequence length="487" mass="55328">MLLPGLLLLLLLLAGTRWLWGQWKLRKLHLPPLAPGFLHFLQPNLPIYLLGLTQKLGPIYRIRLGMQDVVVLNSNRTIEEALIQKWVDFAGRPHMLNGKMDLDLSLGDYSLMWKAHKKLSRSALMLGMRDSMEPLIEQLTQEFCERMRAQAGTPVAIHKEFSFLTCSIISCLTFGDKDSTLVQTLHDCVQDLLQAWNHWSIQILTIIPLLRFLPNPGLQKLKQIQESRDHIVKQQLKQHKDSLVAGQWKDMIDYMLQGVEKQRDGKDEERLHEGHVHMSVVDLFIGGTETTATTLSWAVAFLLHHPEIQKRLQEELDLKLGPGSQLLYRNRMQLPLLMATIAEVLRLRPVVPLALPHRATRASSISGYDIPKDMVIIPNIQGANLDEMVWELPSKFWPDRFLEPGKNPRTPSFGCGARVCLGEPLARLELFVVLARLLQAFTLLPPPDGTLPSLQPQPYAGINLPIPPFQVRLQPRNLAPQDQGERP</sequence>
<organism>
    <name type="scientific">Mus musculus</name>
    <name type="common">Mouse</name>
    <dbReference type="NCBI Taxonomy" id="10090"/>
    <lineage>
        <taxon>Eukaryota</taxon>
        <taxon>Metazoa</taxon>
        <taxon>Chordata</taxon>
        <taxon>Craniata</taxon>
        <taxon>Vertebrata</taxon>
        <taxon>Euteleostomi</taxon>
        <taxon>Mammalia</taxon>
        <taxon>Eutheria</taxon>
        <taxon>Euarchontoglires</taxon>
        <taxon>Glires</taxon>
        <taxon>Rodentia</taxon>
        <taxon>Myomorpha</taxon>
        <taxon>Muroidea</taxon>
        <taxon>Muridae</taxon>
        <taxon>Murinae</taxon>
        <taxon>Mus</taxon>
        <taxon>Mus</taxon>
    </lineage>
</organism>
<evidence type="ECO:0000250" key="1">
    <source>
        <dbReference type="UniProtKB" id="P00191"/>
    </source>
</evidence>
<evidence type="ECO:0000250" key="2">
    <source>
        <dbReference type="UniProtKB" id="P08686"/>
    </source>
</evidence>
<evidence type="ECO:0000303" key="3">
    <source ref="3"/>
</evidence>
<evidence type="ECO:0000305" key="4"/>
<gene>
    <name type="primary">Cyp21</name>
    <name type="synonym">Cyp21a-1</name>
    <name type="synonym">Cyp21a1</name>
</gene>
<comment type="function">
    <text evidence="1 2">A cytochrome P450 monooxygenase that plays a major role in adrenal steroidogenesis. Catalyzes the hydroxylation at C-21 of progesterone and 17alpha-hydroxyprogesterone to respectively form 11-deoxycorticosterone and 11-deoxycortisol, intermediate metabolites in the biosynthetic pathway of mineralocorticoids and glucocorticoids. Mechanistically, uses molecular oxygen inserting one oxygen atom into a substrate, and reducing the second into a water molecule, with two electrons provided by NADPH via cytochrome P450 reductase (CPR; NADPH-ferrihemoprotein reductase).</text>
</comment>
<comment type="catalytic activity">
    <reaction evidence="1 2">
        <text>progesterone + reduced [NADPH--hemoprotein reductase] + O2 = 21-hydroxyprogesterone + oxidized [NADPH--hemoprotein reductase] + H2O + H(+)</text>
        <dbReference type="Rhea" id="RHEA:50304"/>
        <dbReference type="Rhea" id="RHEA-COMP:11964"/>
        <dbReference type="Rhea" id="RHEA-COMP:11965"/>
        <dbReference type="ChEBI" id="CHEBI:15377"/>
        <dbReference type="ChEBI" id="CHEBI:15378"/>
        <dbReference type="ChEBI" id="CHEBI:15379"/>
        <dbReference type="ChEBI" id="CHEBI:16973"/>
        <dbReference type="ChEBI" id="CHEBI:17026"/>
        <dbReference type="ChEBI" id="CHEBI:57618"/>
        <dbReference type="ChEBI" id="CHEBI:58210"/>
        <dbReference type="EC" id="1.14.14.16"/>
    </reaction>
    <physiologicalReaction direction="left-to-right" evidence="1 2">
        <dbReference type="Rhea" id="RHEA:50305"/>
    </physiologicalReaction>
</comment>
<comment type="catalytic activity">
    <reaction evidence="1 2">
        <text>17alpha-hydroxyprogesterone + reduced [NADPH--hemoprotein reductase] + O2 = 11-deoxycortisol + oxidized [NADPH--hemoprotein reductase] + H2O + H(+)</text>
        <dbReference type="Rhea" id="RHEA:50308"/>
        <dbReference type="Rhea" id="RHEA-COMP:11964"/>
        <dbReference type="Rhea" id="RHEA-COMP:11965"/>
        <dbReference type="ChEBI" id="CHEBI:15377"/>
        <dbReference type="ChEBI" id="CHEBI:15378"/>
        <dbReference type="ChEBI" id="CHEBI:15379"/>
        <dbReference type="ChEBI" id="CHEBI:17252"/>
        <dbReference type="ChEBI" id="CHEBI:28324"/>
        <dbReference type="ChEBI" id="CHEBI:57618"/>
        <dbReference type="ChEBI" id="CHEBI:58210"/>
        <dbReference type="EC" id="1.14.14.16"/>
    </reaction>
    <physiologicalReaction direction="left-to-right" evidence="1 2">
        <dbReference type="Rhea" id="RHEA:50309"/>
    </physiologicalReaction>
</comment>
<comment type="cofactor">
    <cofactor evidence="1 2">
        <name>heme b</name>
        <dbReference type="ChEBI" id="CHEBI:60344"/>
    </cofactor>
</comment>
<comment type="subcellular location">
    <subcellularLocation>
        <location evidence="2">Endoplasmic reticulum membrane</location>
        <topology evidence="2">Peripheral membrane protein</topology>
    </subcellularLocation>
    <subcellularLocation>
        <location evidence="2">Microsome membrane</location>
        <topology evidence="2">Peripheral membrane protein</topology>
    </subcellularLocation>
</comment>
<comment type="domain">
    <text evidence="2">The leucine-rich hydrophobic amino acid N-terminal region probably helps to anchor the protein to the microsomal membrane.</text>
</comment>
<comment type="similarity">
    <text evidence="4">Belongs to the cytochrome P450 family.</text>
</comment>
<dbReference type="EC" id="1.14.14.16" evidence="1 2"/>
<dbReference type="EMBL" id="M15009">
    <property type="protein sequence ID" value="AAA37114.1"/>
    <property type="molecule type" value="Genomic_DNA"/>
</dbReference>
<dbReference type="EMBL" id="M64933">
    <property type="protein sequence ID" value="AAA40118.1"/>
    <property type="molecule type" value="Genomic_DNA"/>
</dbReference>
<dbReference type="EMBL" id="AB015623">
    <property type="protein sequence ID" value="BAA31153.1"/>
    <property type="molecule type" value="Genomic_DNA"/>
</dbReference>
<dbReference type="EMBL" id="AF049850">
    <property type="protein sequence ID" value="AAC05278.1"/>
    <property type="molecule type" value="Genomic_DNA"/>
</dbReference>
<dbReference type="EMBL" id="BC127167">
    <property type="protein sequence ID" value="AAI27168.1"/>
    <property type="molecule type" value="mRNA"/>
</dbReference>
<dbReference type="CCDS" id="CCDS28658.1"/>
<dbReference type="PIR" id="A26660">
    <property type="entry name" value="A26660"/>
</dbReference>
<dbReference type="PIR" id="S54785">
    <property type="entry name" value="S54785"/>
</dbReference>
<dbReference type="RefSeq" id="NP_034125.2">
    <property type="nucleotide sequence ID" value="NM_009995.2"/>
</dbReference>
<dbReference type="SMR" id="P03940"/>
<dbReference type="BioGRID" id="199004">
    <property type="interactions" value="14"/>
</dbReference>
<dbReference type="FunCoup" id="P03940">
    <property type="interactions" value="109"/>
</dbReference>
<dbReference type="STRING" id="10090.ENSMUSP00000025223"/>
<dbReference type="iPTMnet" id="P03940"/>
<dbReference type="PhosphoSitePlus" id="P03940"/>
<dbReference type="PaxDb" id="10090-ENSMUSP00000025223"/>
<dbReference type="ProteomicsDB" id="283808"/>
<dbReference type="GeneID" id="13079"/>
<dbReference type="KEGG" id="mmu:13079"/>
<dbReference type="UCSC" id="uc008cdo.2">
    <property type="organism name" value="mouse"/>
</dbReference>
<dbReference type="AGR" id="MGI:88591"/>
<dbReference type="CTD" id="13079"/>
<dbReference type="MGI" id="MGI:88591">
    <property type="gene designation" value="Cyp21a1"/>
</dbReference>
<dbReference type="eggNOG" id="KOG0156">
    <property type="taxonomic scope" value="Eukaryota"/>
</dbReference>
<dbReference type="InParanoid" id="P03940"/>
<dbReference type="OrthoDB" id="2789670at2759"/>
<dbReference type="PhylomeDB" id="P03940"/>
<dbReference type="TreeFam" id="TF105095"/>
<dbReference type="Reactome" id="R-MMU-193993">
    <property type="pathway name" value="Mineralocorticoid biosynthesis"/>
</dbReference>
<dbReference type="Reactome" id="R-MMU-194002">
    <property type="pathway name" value="Glucocorticoid biosynthesis"/>
</dbReference>
<dbReference type="Reactome" id="R-MMU-211976">
    <property type="pathway name" value="Endogenous sterols"/>
</dbReference>
<dbReference type="BioGRID-ORCS" id="13079">
    <property type="hits" value="1 hit in 81 CRISPR screens"/>
</dbReference>
<dbReference type="PRO" id="PR:P03940"/>
<dbReference type="Proteomes" id="UP000000589">
    <property type="component" value="Unplaced"/>
</dbReference>
<dbReference type="RNAct" id="P03940">
    <property type="molecule type" value="protein"/>
</dbReference>
<dbReference type="GO" id="GO:0005789">
    <property type="term" value="C:endoplasmic reticulum membrane"/>
    <property type="evidence" value="ECO:0007669"/>
    <property type="project" value="UniProtKB-SubCell"/>
</dbReference>
<dbReference type="GO" id="GO:0103069">
    <property type="term" value="F:17-hydroxyprogesterone 21-hydroxylase activity"/>
    <property type="evidence" value="ECO:0000250"/>
    <property type="project" value="UniProtKB"/>
</dbReference>
<dbReference type="GO" id="GO:0020037">
    <property type="term" value="F:heme binding"/>
    <property type="evidence" value="ECO:0000250"/>
    <property type="project" value="UniProtKB"/>
</dbReference>
<dbReference type="GO" id="GO:0005506">
    <property type="term" value="F:iron ion binding"/>
    <property type="evidence" value="ECO:0007669"/>
    <property type="project" value="InterPro"/>
</dbReference>
<dbReference type="GO" id="GO:0106309">
    <property type="term" value="F:progesterone 21-hydroxylase activity"/>
    <property type="evidence" value="ECO:0000250"/>
    <property type="project" value="UniProtKB"/>
</dbReference>
<dbReference type="GO" id="GO:0005496">
    <property type="term" value="F:steroid binding"/>
    <property type="evidence" value="ECO:0007669"/>
    <property type="project" value="UniProtKB-KW"/>
</dbReference>
<dbReference type="GO" id="GO:0008395">
    <property type="term" value="F:steroid hydroxylase activity"/>
    <property type="evidence" value="ECO:0000250"/>
    <property type="project" value="UniProtKB"/>
</dbReference>
<dbReference type="GO" id="GO:0006694">
    <property type="term" value="P:steroid biosynthetic process"/>
    <property type="evidence" value="ECO:0007669"/>
    <property type="project" value="UniProtKB-KW"/>
</dbReference>
<dbReference type="GO" id="GO:0008202">
    <property type="term" value="P:steroid metabolic process"/>
    <property type="evidence" value="ECO:0000250"/>
    <property type="project" value="UniProtKB"/>
</dbReference>
<dbReference type="CDD" id="cd20674">
    <property type="entry name" value="CYP21"/>
    <property type="match status" value="1"/>
</dbReference>
<dbReference type="FunFam" id="1.10.630.10:FF:000049">
    <property type="entry name" value="steroid 21-hydroxylase isoform X1"/>
    <property type="match status" value="1"/>
</dbReference>
<dbReference type="Gene3D" id="1.10.630.10">
    <property type="entry name" value="Cytochrome P450"/>
    <property type="match status" value="1"/>
</dbReference>
<dbReference type="InterPro" id="IPR001128">
    <property type="entry name" value="Cyt_P450"/>
</dbReference>
<dbReference type="InterPro" id="IPR017972">
    <property type="entry name" value="Cyt_P450_CS"/>
</dbReference>
<dbReference type="InterPro" id="IPR002401">
    <property type="entry name" value="Cyt_P450_E_grp-I"/>
</dbReference>
<dbReference type="InterPro" id="IPR036396">
    <property type="entry name" value="Cyt_P450_sf"/>
</dbReference>
<dbReference type="PANTHER" id="PTHR24289">
    <property type="entry name" value="STEROID 17-ALPHA-HYDROXYLASE/17,20 LYASE"/>
    <property type="match status" value="1"/>
</dbReference>
<dbReference type="PANTHER" id="PTHR24289:SF17">
    <property type="entry name" value="STEROID 21-HYDROXYLASE ISOFORM X1"/>
    <property type="match status" value="1"/>
</dbReference>
<dbReference type="Pfam" id="PF00067">
    <property type="entry name" value="p450"/>
    <property type="match status" value="1"/>
</dbReference>
<dbReference type="PRINTS" id="PR00463">
    <property type="entry name" value="EP450I"/>
</dbReference>
<dbReference type="PRINTS" id="PR00385">
    <property type="entry name" value="P450"/>
</dbReference>
<dbReference type="SUPFAM" id="SSF48264">
    <property type="entry name" value="Cytochrome P450"/>
    <property type="match status" value="1"/>
</dbReference>
<dbReference type="PROSITE" id="PS00086">
    <property type="entry name" value="CYTOCHROME_P450"/>
    <property type="match status" value="1"/>
</dbReference>
<protein>
    <recommendedName>
        <fullName evidence="3">Steroid 21-hydroxylase</fullName>
        <ecNumber evidence="1 2">1.14.14.16</ecNumber>
    </recommendedName>
    <alternativeName>
        <fullName>21-OHase</fullName>
    </alternativeName>
    <alternativeName>
        <fullName>Cytochrome P-450c21</fullName>
    </alternativeName>
    <alternativeName>
        <fullName>Cytochrome P450 21</fullName>
    </alternativeName>
    <alternativeName>
        <fullName>Cytochrome P450 XXI</fullName>
    </alternativeName>
    <alternativeName>
        <fullName>Cytochrome P450-C21</fullName>
    </alternativeName>
</protein>
<keyword id="KW-0256">Endoplasmic reticulum</keyword>
<keyword id="KW-0349">Heme</keyword>
<keyword id="KW-0408">Iron</keyword>
<keyword id="KW-0446">Lipid-binding</keyword>
<keyword id="KW-0472">Membrane</keyword>
<keyword id="KW-0479">Metal-binding</keyword>
<keyword id="KW-0492">Microsome</keyword>
<keyword id="KW-0503">Monooxygenase</keyword>
<keyword id="KW-0560">Oxidoreductase</keyword>
<keyword id="KW-1185">Reference proteome</keyword>
<keyword id="KW-0754">Steroid-binding</keyword>
<keyword id="KW-0755">Steroidogenesis</keyword>
<feature type="chain" id="PRO_0000051977" description="Steroid 21-hydroxylase">
    <location>
        <begin position="1"/>
        <end position="487"/>
    </location>
</feature>
<feature type="binding site" evidence="2">
    <location>
        <position position="92"/>
    </location>
    <ligand>
        <name>heme b</name>
        <dbReference type="ChEBI" id="CHEBI:60344"/>
    </ligand>
</feature>
<feature type="binding site" evidence="2">
    <location>
        <position position="117"/>
    </location>
    <ligand>
        <name>heme b</name>
        <dbReference type="ChEBI" id="CHEBI:60344"/>
    </ligand>
</feature>
<feature type="binding site" evidence="1">
    <location>
        <position position="228"/>
    </location>
    <ligand>
        <name>17alpha-hydroxyprogesterone</name>
        <dbReference type="ChEBI" id="CHEBI:17252"/>
    </ligand>
</feature>
<feature type="binding site" evidence="2">
    <location>
        <position position="228"/>
    </location>
    <ligand>
        <name>progesterone</name>
        <dbReference type="ChEBI" id="CHEBI:17026"/>
    </ligand>
</feature>
<feature type="binding site" evidence="2">
    <location>
        <position position="357"/>
    </location>
    <ligand>
        <name>heme b</name>
        <dbReference type="ChEBI" id="CHEBI:60344"/>
    </ligand>
</feature>
<feature type="binding site" evidence="2">
    <location>
        <position position="418"/>
    </location>
    <ligand>
        <name>heme b</name>
        <dbReference type="ChEBI" id="CHEBI:60344"/>
    </ligand>
</feature>
<feature type="binding site" description="axial binding residue" evidence="2">
    <location>
        <position position="420"/>
    </location>
    <ligand>
        <name>heme b</name>
        <dbReference type="ChEBI" id="CHEBI:60344"/>
    </ligand>
    <ligandPart>
        <name>Fe</name>
        <dbReference type="ChEBI" id="CHEBI:18248"/>
    </ligandPart>
</feature>
<feature type="sequence conflict" description="In Ref. 1; AAA37114." evidence="4" ref="1">
    <original>PP</original>
    <variation>LR</variation>
    <location>
        <begin position="31"/>
        <end position="32"/>
    </location>
</feature>
<feature type="sequence conflict" description="In Ref. 1; AAA37114." evidence="4" ref="1">
    <original>M</original>
    <variation>L</variation>
    <location>
        <position position="66"/>
    </location>
</feature>
<feature type="sequence conflict" description="In Ref. 3; BAA31153." evidence="4" ref="3">
    <original>L</original>
    <variation>F</variation>
    <location>
        <position position="218"/>
    </location>
</feature>
<feature type="sequence conflict" description="In Ref. 3; BAA31153 and 4; AAC05278." evidence="4" ref="3 4">
    <original>Q</original>
    <variation>R</variation>
    <location>
        <position position="238"/>
    </location>
</feature>
<feature type="sequence conflict" description="In Ref. 1; AAA37114." evidence="4" ref="1">
    <original>D</original>
    <variation>E</variation>
    <location>
        <position position="241"/>
    </location>
</feature>
<feature type="sequence conflict" description="In Ref. 1; AAA37114." evidence="4" ref="1">
    <original>E</original>
    <variation>A</variation>
    <location>
        <position position="314"/>
    </location>
</feature>
<name>CP21A_MOUSE</name>
<proteinExistence type="evidence at transcript level"/>
<accession>P03940</accession>
<accession>A0JP50</accession>
<accession>O88304</accession>
<accession>Q64510</accession>
<accession>Q9QX14</accession>